<sequence length="172" mass="19091">MATPAYMSITGTKQGLITAGAFTEDSVGNTYQEGHEDQVMVQGFNHEVIIPRDPQSGQPTGQRVHKPVVITKVFDKASPLLLAALTSGERLTKVEIQWYRTSAAGTQEHYYTTVLEDAIIVDIKDYMHNCQDPGNAHFTHLEDVHFTYRKITWTHEVSGTSGSDDWRSPVAG</sequence>
<gene>
    <name type="primary">hcpA</name>
    <name type="ordered locus">PA0263</name>
</gene>
<gene>
    <name type="primary">hcpB</name>
    <name type="ordered locus">PA1512</name>
</gene>
<gene>
    <name type="primary">hcpC</name>
    <name type="ordered locus">PA5267</name>
</gene>
<dbReference type="EMBL" id="AE004091">
    <property type="protein sequence ID" value="AAG03652.1"/>
    <property type="molecule type" value="Genomic_DNA"/>
</dbReference>
<dbReference type="EMBL" id="AE004091">
    <property type="protein sequence ID" value="AAG04901.1"/>
    <property type="molecule type" value="Genomic_DNA"/>
</dbReference>
<dbReference type="EMBL" id="AE004091">
    <property type="protein sequence ID" value="AAG08652.1"/>
    <property type="molecule type" value="Genomic_DNA"/>
</dbReference>
<dbReference type="PIR" id="G82987">
    <property type="entry name" value="G82987"/>
</dbReference>
<dbReference type="RefSeq" id="NP_248954.1">
    <property type="nucleotide sequence ID" value="NC_002516.2"/>
</dbReference>
<dbReference type="RefSeq" id="NP_250203.1">
    <property type="nucleotide sequence ID" value="NC_002516.2"/>
</dbReference>
<dbReference type="RefSeq" id="NP_253954.1">
    <property type="nucleotide sequence ID" value="NC_002516.2"/>
</dbReference>
<dbReference type="RefSeq" id="WP_003083317.1">
    <property type="nucleotide sequence ID" value="NZ_JASSSF010000020.1"/>
</dbReference>
<dbReference type="PDB" id="3HE1">
    <property type="method" value="X-ray"/>
    <property type="resolution" value="2.10 A"/>
    <property type="chains" value="A/B/C/D/E/F=1-172"/>
</dbReference>
<dbReference type="PDBsum" id="3HE1"/>
<dbReference type="SMR" id="Q9HI36"/>
<dbReference type="STRING" id="208964.PA0263"/>
<dbReference type="PaxDb" id="208964-PA0263"/>
<dbReference type="DNASU" id="879579"/>
<dbReference type="GeneID" id="879579"/>
<dbReference type="GeneID" id="880866"/>
<dbReference type="GeneID" id="883081"/>
<dbReference type="KEGG" id="pae:PA0263"/>
<dbReference type="KEGG" id="pae:PA1512"/>
<dbReference type="KEGG" id="pae:PA5267"/>
<dbReference type="PATRIC" id="fig|208964.12.peg.1564"/>
<dbReference type="PseudoCAP" id="PA5267"/>
<dbReference type="HOGENOM" id="CLU_116190_1_0_6"/>
<dbReference type="InParanoid" id="Q9HI36"/>
<dbReference type="OrthoDB" id="5674026at2"/>
<dbReference type="PhylomeDB" id="Q9HI36"/>
<dbReference type="EvolutionaryTrace" id="Q9HI36"/>
<dbReference type="Proteomes" id="UP000002438">
    <property type="component" value="Chromosome"/>
</dbReference>
<dbReference type="GO" id="GO:0005576">
    <property type="term" value="C:extracellular region"/>
    <property type="evidence" value="ECO:0007669"/>
    <property type="project" value="UniProtKB-SubCell"/>
</dbReference>
<dbReference type="Gene3D" id="2.30.110.20">
    <property type="entry name" value="Hcp1-like"/>
    <property type="match status" value="1"/>
</dbReference>
<dbReference type="InterPro" id="IPR036624">
    <property type="entry name" value="Hcp1-lik_sf"/>
</dbReference>
<dbReference type="InterPro" id="IPR008514">
    <property type="entry name" value="T6SS_Hcp"/>
</dbReference>
<dbReference type="InterPro" id="IPR052947">
    <property type="entry name" value="T6SS_Hcp1_domain"/>
</dbReference>
<dbReference type="NCBIfam" id="TIGR03344">
    <property type="entry name" value="VI_effect_Hcp1"/>
    <property type="match status" value="1"/>
</dbReference>
<dbReference type="PANTHER" id="PTHR34319">
    <property type="entry name" value="MAJOR EXPORTED PROTEIN"/>
    <property type="match status" value="1"/>
</dbReference>
<dbReference type="PANTHER" id="PTHR34319:SF6">
    <property type="entry name" value="MAJOR EXPORTED PROTEIN"/>
    <property type="match status" value="1"/>
</dbReference>
<dbReference type="Pfam" id="PF05638">
    <property type="entry name" value="T6SS_HCP"/>
    <property type="match status" value="1"/>
</dbReference>
<dbReference type="SUPFAM" id="SSF141452">
    <property type="entry name" value="Hcp1-like"/>
    <property type="match status" value="1"/>
</dbReference>
<protein>
    <recommendedName>
        <fullName>Major exported protein</fullName>
    </recommendedName>
    <alternativeName>
        <fullName>Secreted protein hcp</fullName>
    </alternativeName>
</protein>
<feature type="initiator methionine" description="Removed" evidence="1">
    <location>
        <position position="1"/>
    </location>
</feature>
<feature type="chain" id="PRO_0000288024" description="Major exported protein">
    <location>
        <begin position="2"/>
        <end position="172"/>
    </location>
</feature>
<feature type="strand" evidence="3">
    <location>
        <begin position="5"/>
        <end position="11"/>
    </location>
</feature>
<feature type="turn" evidence="3">
    <location>
        <begin position="12"/>
        <end position="14"/>
    </location>
</feature>
<feature type="turn" evidence="3">
    <location>
        <begin position="17"/>
        <end position="20"/>
    </location>
</feature>
<feature type="helix" evidence="3">
    <location>
        <begin position="24"/>
        <end position="27"/>
    </location>
</feature>
<feature type="helix" evidence="3">
    <location>
        <begin position="28"/>
        <end position="30"/>
    </location>
</feature>
<feature type="strand" evidence="3">
    <location>
        <begin position="38"/>
        <end position="41"/>
    </location>
</feature>
<feature type="strand" evidence="3">
    <location>
        <begin position="43"/>
        <end position="45"/>
    </location>
</feature>
<feature type="strand" evidence="3">
    <location>
        <begin position="68"/>
        <end position="74"/>
    </location>
</feature>
<feature type="helix" evidence="3">
    <location>
        <begin position="78"/>
        <end position="87"/>
    </location>
</feature>
<feature type="strand" evidence="3">
    <location>
        <begin position="90"/>
        <end position="101"/>
    </location>
</feature>
<feature type="strand" evidence="3">
    <location>
        <begin position="105"/>
        <end position="127"/>
    </location>
</feature>
<feature type="strand" evidence="3">
    <location>
        <begin position="140"/>
        <end position="147"/>
    </location>
</feature>
<feature type="strand" evidence="3">
    <location>
        <begin position="149"/>
        <end position="155"/>
    </location>
</feature>
<feature type="turn" evidence="3">
    <location>
        <begin position="156"/>
        <end position="158"/>
    </location>
</feature>
<feature type="strand" evidence="3">
    <location>
        <begin position="161"/>
        <end position="165"/>
    </location>
</feature>
<accession>Q9HI36</accession>
<reference key="1">
    <citation type="journal article" date="2000" name="Nature">
        <title>Complete genome sequence of Pseudomonas aeruginosa PAO1, an opportunistic pathogen.</title>
        <authorList>
            <person name="Stover C.K."/>
            <person name="Pham X.-Q.T."/>
            <person name="Erwin A.L."/>
            <person name="Mizoguchi S.D."/>
            <person name="Warrener P."/>
            <person name="Hickey M.J."/>
            <person name="Brinkman F.S.L."/>
            <person name="Hufnagle W.O."/>
            <person name="Kowalik D.J."/>
            <person name="Lagrou M."/>
            <person name="Garber R.L."/>
            <person name="Goltry L."/>
            <person name="Tolentino E."/>
            <person name="Westbrock-Wadman S."/>
            <person name="Yuan Y."/>
            <person name="Brody L.L."/>
            <person name="Coulter S.N."/>
            <person name="Folger K.R."/>
            <person name="Kas A."/>
            <person name="Larbig K."/>
            <person name="Lim R.M."/>
            <person name="Smith K.A."/>
            <person name="Spencer D.H."/>
            <person name="Wong G.K.-S."/>
            <person name="Wu Z."/>
            <person name="Paulsen I.T."/>
            <person name="Reizer J."/>
            <person name="Saier M.H. Jr."/>
            <person name="Hancock R.E.W."/>
            <person name="Lory S."/>
            <person name="Olson M.V."/>
        </authorList>
    </citation>
    <scope>NUCLEOTIDE SEQUENCE [LARGE SCALE GENOMIC DNA]</scope>
    <source>
        <strain>ATCC 15692 / DSM 22644 / CIP 104116 / JCM 14847 / LMG 12228 / 1C / PRS 101 / PAO1</strain>
    </source>
</reference>
<comment type="subcellular location">
    <subcellularLocation>
        <location evidence="1">Secreted</location>
    </subcellularLocation>
</comment>
<comment type="similarity">
    <text evidence="2">Belongs to the hcp1 family.</text>
</comment>
<keyword id="KW-0002">3D-structure</keyword>
<keyword id="KW-1185">Reference proteome</keyword>
<keyword id="KW-0964">Secreted</keyword>
<evidence type="ECO:0000250" key="1"/>
<evidence type="ECO:0000305" key="2"/>
<evidence type="ECO:0007829" key="3">
    <source>
        <dbReference type="PDB" id="3HE1"/>
    </source>
</evidence>
<organism>
    <name type="scientific">Pseudomonas aeruginosa (strain ATCC 15692 / DSM 22644 / CIP 104116 / JCM 14847 / LMG 12228 / 1C / PRS 101 / PAO1)</name>
    <dbReference type="NCBI Taxonomy" id="208964"/>
    <lineage>
        <taxon>Bacteria</taxon>
        <taxon>Pseudomonadati</taxon>
        <taxon>Pseudomonadota</taxon>
        <taxon>Gammaproteobacteria</taxon>
        <taxon>Pseudomonadales</taxon>
        <taxon>Pseudomonadaceae</taxon>
        <taxon>Pseudomonas</taxon>
    </lineage>
</organism>
<proteinExistence type="evidence at protein level"/>
<name>MAJE_PSEAE</name>